<evidence type="ECO:0000255" key="1">
    <source>
        <dbReference type="HAMAP-Rule" id="MF_00518"/>
    </source>
</evidence>
<organism>
    <name type="scientific">Escherichia coli O6:H1 (strain CFT073 / ATCC 700928 / UPEC)</name>
    <dbReference type="NCBI Taxonomy" id="199310"/>
    <lineage>
        <taxon>Bacteria</taxon>
        <taxon>Pseudomonadati</taxon>
        <taxon>Pseudomonadota</taxon>
        <taxon>Gammaproteobacteria</taxon>
        <taxon>Enterobacterales</taxon>
        <taxon>Enterobacteriaceae</taxon>
        <taxon>Escherichia</taxon>
    </lineage>
</organism>
<sequence>MIALIQRVTRASVTVEGEVTGEIGAGLLVLLGVEKDDDEQKANRLCERVLGYRIFSDAEGKMNLNVQQAGGSVLVVSQFTLAADTERGMRPSFSKGASPDRAEALYDYFVERCRQQEMNTQTGRFAADMQVSLVNDGPVTFWLQV</sequence>
<name>DTD_ECOL6</name>
<keyword id="KW-0963">Cytoplasm</keyword>
<keyword id="KW-0378">Hydrolase</keyword>
<keyword id="KW-1185">Reference proteome</keyword>
<keyword id="KW-0694">RNA-binding</keyword>
<keyword id="KW-0820">tRNA-binding</keyword>
<feature type="chain" id="PRO_0000164538" description="D-aminoacyl-tRNA deacylase">
    <location>
        <begin position="1"/>
        <end position="145"/>
    </location>
</feature>
<feature type="short sequence motif" description="Gly-cisPro motif, important for rejection of L-amino acids" evidence="1">
    <location>
        <begin position="137"/>
        <end position="138"/>
    </location>
</feature>
<accession>P0A6M5</accession>
<accession>P32147</accession>
<protein>
    <recommendedName>
        <fullName evidence="1">D-aminoacyl-tRNA deacylase</fullName>
        <shortName evidence="1">DTD</shortName>
        <ecNumber evidence="1">3.1.1.96</ecNumber>
    </recommendedName>
    <alternativeName>
        <fullName evidence="1">Gly-tRNA(Ala) deacylase</fullName>
    </alternativeName>
</protein>
<reference key="1">
    <citation type="journal article" date="2002" name="Proc. Natl. Acad. Sci. U.S.A.">
        <title>Extensive mosaic structure revealed by the complete genome sequence of uropathogenic Escherichia coli.</title>
        <authorList>
            <person name="Welch R.A."/>
            <person name="Burland V."/>
            <person name="Plunkett G. III"/>
            <person name="Redford P."/>
            <person name="Roesch P."/>
            <person name="Rasko D."/>
            <person name="Buckles E.L."/>
            <person name="Liou S.-R."/>
            <person name="Boutin A."/>
            <person name="Hackett J."/>
            <person name="Stroud D."/>
            <person name="Mayhew G.F."/>
            <person name="Rose D.J."/>
            <person name="Zhou S."/>
            <person name="Schwartz D.C."/>
            <person name="Perna N.T."/>
            <person name="Mobley H.L.T."/>
            <person name="Donnenberg M.S."/>
            <person name="Blattner F.R."/>
        </authorList>
    </citation>
    <scope>NUCLEOTIDE SEQUENCE [LARGE SCALE GENOMIC DNA]</scope>
    <source>
        <strain>CFT073 / ATCC 700928 / UPEC</strain>
    </source>
</reference>
<comment type="function">
    <text evidence="1">An aminoacyl-tRNA editing enzyme that deacylates mischarged D-aminoacyl-tRNAs. Also deacylates mischarged glycyl-tRNA(Ala), protecting cells against glycine mischarging by AlaRS. Acts via tRNA-based rather than protein-based catalysis; rejects L-amino acids rather than detecting D-amino acids in the active site. By recycling D-aminoacyl-tRNA to D-amino acids and free tRNA molecules, this enzyme counteracts the toxicity associated with the formation of D-aminoacyl-tRNA entities in vivo and helps enforce protein L-homochirality.</text>
</comment>
<comment type="catalytic activity">
    <reaction evidence="1">
        <text>glycyl-tRNA(Ala) + H2O = tRNA(Ala) + glycine + H(+)</text>
        <dbReference type="Rhea" id="RHEA:53744"/>
        <dbReference type="Rhea" id="RHEA-COMP:9657"/>
        <dbReference type="Rhea" id="RHEA-COMP:13640"/>
        <dbReference type="ChEBI" id="CHEBI:15377"/>
        <dbReference type="ChEBI" id="CHEBI:15378"/>
        <dbReference type="ChEBI" id="CHEBI:57305"/>
        <dbReference type="ChEBI" id="CHEBI:78442"/>
        <dbReference type="ChEBI" id="CHEBI:78522"/>
        <dbReference type="EC" id="3.1.1.96"/>
    </reaction>
</comment>
<comment type="catalytic activity">
    <reaction evidence="1">
        <text>a D-aminoacyl-tRNA + H2O = a tRNA + a D-alpha-amino acid + H(+)</text>
        <dbReference type="Rhea" id="RHEA:13953"/>
        <dbReference type="Rhea" id="RHEA-COMP:10123"/>
        <dbReference type="Rhea" id="RHEA-COMP:10124"/>
        <dbReference type="ChEBI" id="CHEBI:15377"/>
        <dbReference type="ChEBI" id="CHEBI:15378"/>
        <dbReference type="ChEBI" id="CHEBI:59871"/>
        <dbReference type="ChEBI" id="CHEBI:78442"/>
        <dbReference type="ChEBI" id="CHEBI:79333"/>
        <dbReference type="EC" id="3.1.1.96"/>
    </reaction>
</comment>
<comment type="subunit">
    <text evidence="1">Homodimer.</text>
</comment>
<comment type="subcellular location">
    <subcellularLocation>
        <location evidence="1">Cytoplasm</location>
    </subcellularLocation>
</comment>
<comment type="domain">
    <text evidence="1">A Gly-cisPro motif from one monomer fits into the active site of the other monomer to allow specific chiral rejection of L-amino acids.</text>
</comment>
<comment type="similarity">
    <text evidence="1">Belongs to the DTD family.</text>
</comment>
<dbReference type="EC" id="3.1.1.96" evidence="1"/>
<dbReference type="EMBL" id="AE014075">
    <property type="protein sequence ID" value="AAN83263.1"/>
    <property type="molecule type" value="Genomic_DNA"/>
</dbReference>
<dbReference type="RefSeq" id="WP_000560983.1">
    <property type="nucleotide sequence ID" value="NZ_CP051263.1"/>
</dbReference>
<dbReference type="SMR" id="P0A6M5"/>
<dbReference type="STRING" id="199310.c4834"/>
<dbReference type="GeneID" id="93778051"/>
<dbReference type="KEGG" id="ecc:c4834"/>
<dbReference type="eggNOG" id="COG1490">
    <property type="taxonomic scope" value="Bacteria"/>
</dbReference>
<dbReference type="HOGENOM" id="CLU_076901_1_0_6"/>
<dbReference type="BioCyc" id="ECOL199310:C4834-MONOMER"/>
<dbReference type="Proteomes" id="UP000001410">
    <property type="component" value="Chromosome"/>
</dbReference>
<dbReference type="GO" id="GO:0005737">
    <property type="term" value="C:cytoplasm"/>
    <property type="evidence" value="ECO:0007669"/>
    <property type="project" value="UniProtKB-SubCell"/>
</dbReference>
<dbReference type="GO" id="GO:0051500">
    <property type="term" value="F:D-tyrosyl-tRNA(Tyr) deacylase activity"/>
    <property type="evidence" value="ECO:0007669"/>
    <property type="project" value="TreeGrafter"/>
</dbReference>
<dbReference type="GO" id="GO:0106026">
    <property type="term" value="F:Gly-tRNA(Ala) deacylase activity"/>
    <property type="evidence" value="ECO:0007669"/>
    <property type="project" value="UniProtKB-UniRule"/>
</dbReference>
<dbReference type="GO" id="GO:0043908">
    <property type="term" value="F:Ser(Gly)-tRNA(Ala) hydrolase activity"/>
    <property type="evidence" value="ECO:0007669"/>
    <property type="project" value="UniProtKB-UniRule"/>
</dbReference>
<dbReference type="GO" id="GO:0000049">
    <property type="term" value="F:tRNA binding"/>
    <property type="evidence" value="ECO:0007669"/>
    <property type="project" value="UniProtKB-UniRule"/>
</dbReference>
<dbReference type="GO" id="GO:0019478">
    <property type="term" value="P:D-amino acid catabolic process"/>
    <property type="evidence" value="ECO:0007669"/>
    <property type="project" value="UniProtKB-UniRule"/>
</dbReference>
<dbReference type="CDD" id="cd00563">
    <property type="entry name" value="Dtyr_deacylase"/>
    <property type="match status" value="1"/>
</dbReference>
<dbReference type="FunFam" id="3.50.80.10:FF:000001">
    <property type="entry name" value="D-aminoacyl-tRNA deacylase"/>
    <property type="match status" value="1"/>
</dbReference>
<dbReference type="Gene3D" id="3.50.80.10">
    <property type="entry name" value="D-tyrosyl-tRNA(Tyr) deacylase"/>
    <property type="match status" value="1"/>
</dbReference>
<dbReference type="HAMAP" id="MF_00518">
    <property type="entry name" value="Deacylase_Dtd"/>
    <property type="match status" value="1"/>
</dbReference>
<dbReference type="InterPro" id="IPR003732">
    <property type="entry name" value="Daa-tRNA_deacyls_DTD"/>
</dbReference>
<dbReference type="InterPro" id="IPR023509">
    <property type="entry name" value="DTD-like_sf"/>
</dbReference>
<dbReference type="NCBIfam" id="TIGR00256">
    <property type="entry name" value="D-aminoacyl-tRNA deacylase"/>
    <property type="match status" value="1"/>
</dbReference>
<dbReference type="PANTHER" id="PTHR10472:SF5">
    <property type="entry name" value="D-AMINOACYL-TRNA DEACYLASE 1"/>
    <property type="match status" value="1"/>
</dbReference>
<dbReference type="PANTHER" id="PTHR10472">
    <property type="entry name" value="D-TYROSYL-TRNA TYR DEACYLASE"/>
    <property type="match status" value="1"/>
</dbReference>
<dbReference type="Pfam" id="PF02580">
    <property type="entry name" value="Tyr_Deacylase"/>
    <property type="match status" value="1"/>
</dbReference>
<dbReference type="SUPFAM" id="SSF69500">
    <property type="entry name" value="DTD-like"/>
    <property type="match status" value="1"/>
</dbReference>
<proteinExistence type="inferred from homology"/>
<gene>
    <name evidence="1" type="primary">dtd</name>
    <name type="ordered locus">c4834</name>
</gene>